<reference key="1">
    <citation type="submission" date="2007-09" db="EMBL/GenBank/DDBJ databases">
        <title>Complete genome sequence of Rickettsia rickettsii.</title>
        <authorList>
            <person name="Madan A."/>
            <person name="Fahey J."/>
            <person name="Helton E."/>
            <person name="Ketteman M."/>
            <person name="Madan A."/>
            <person name="Rodrigues S."/>
            <person name="Sanchez A."/>
            <person name="Dasch G."/>
            <person name="Eremeeva M."/>
        </authorList>
    </citation>
    <scope>NUCLEOTIDE SEQUENCE [LARGE SCALE GENOMIC DNA]</scope>
    <source>
        <strain>Sheila Smith</strain>
    </source>
</reference>
<dbReference type="EC" id="2.7.4.25" evidence="1"/>
<dbReference type="EMBL" id="CP000848">
    <property type="protein sequence ID" value="ABV76351.1"/>
    <property type="molecule type" value="Genomic_DNA"/>
</dbReference>
<dbReference type="RefSeq" id="WP_012150925.1">
    <property type="nucleotide sequence ID" value="NZ_CP121767.1"/>
</dbReference>
<dbReference type="SMR" id="A8GSH6"/>
<dbReference type="GeneID" id="79937471"/>
<dbReference type="KEGG" id="rri:A1G_04215"/>
<dbReference type="HOGENOM" id="CLU_079959_0_2_5"/>
<dbReference type="Proteomes" id="UP000006832">
    <property type="component" value="Chromosome"/>
</dbReference>
<dbReference type="GO" id="GO:0005737">
    <property type="term" value="C:cytoplasm"/>
    <property type="evidence" value="ECO:0007669"/>
    <property type="project" value="UniProtKB-SubCell"/>
</dbReference>
<dbReference type="GO" id="GO:0005524">
    <property type="term" value="F:ATP binding"/>
    <property type="evidence" value="ECO:0007669"/>
    <property type="project" value="UniProtKB-UniRule"/>
</dbReference>
<dbReference type="GO" id="GO:0036430">
    <property type="term" value="F:CMP kinase activity"/>
    <property type="evidence" value="ECO:0007669"/>
    <property type="project" value="RHEA"/>
</dbReference>
<dbReference type="GO" id="GO:0036431">
    <property type="term" value="F:dCMP kinase activity"/>
    <property type="evidence" value="ECO:0007669"/>
    <property type="project" value="RHEA"/>
</dbReference>
<dbReference type="GO" id="GO:0006220">
    <property type="term" value="P:pyrimidine nucleotide metabolic process"/>
    <property type="evidence" value="ECO:0007669"/>
    <property type="project" value="UniProtKB-UniRule"/>
</dbReference>
<dbReference type="CDD" id="cd02020">
    <property type="entry name" value="CMPK"/>
    <property type="match status" value="1"/>
</dbReference>
<dbReference type="Gene3D" id="3.40.50.300">
    <property type="entry name" value="P-loop containing nucleotide triphosphate hydrolases"/>
    <property type="match status" value="1"/>
</dbReference>
<dbReference type="HAMAP" id="MF_00238">
    <property type="entry name" value="Cytidyl_kinase_type1"/>
    <property type="match status" value="1"/>
</dbReference>
<dbReference type="InterPro" id="IPR003136">
    <property type="entry name" value="Cytidylate_kin"/>
</dbReference>
<dbReference type="InterPro" id="IPR011994">
    <property type="entry name" value="Cytidylate_kinase_dom"/>
</dbReference>
<dbReference type="InterPro" id="IPR027417">
    <property type="entry name" value="P-loop_NTPase"/>
</dbReference>
<dbReference type="NCBIfam" id="TIGR00017">
    <property type="entry name" value="cmk"/>
    <property type="match status" value="1"/>
</dbReference>
<dbReference type="Pfam" id="PF02224">
    <property type="entry name" value="Cytidylate_kin"/>
    <property type="match status" value="1"/>
</dbReference>
<dbReference type="SUPFAM" id="SSF52540">
    <property type="entry name" value="P-loop containing nucleoside triphosphate hydrolases"/>
    <property type="match status" value="1"/>
</dbReference>
<keyword id="KW-0067">ATP-binding</keyword>
<keyword id="KW-0963">Cytoplasm</keyword>
<keyword id="KW-0418">Kinase</keyword>
<keyword id="KW-0547">Nucleotide-binding</keyword>
<keyword id="KW-0808">Transferase</keyword>
<sequence>MVDLKTKAFDISQNFTIALDGPAASGKGTIGLILAKKFSLKYFQSSIVYRQLAFDCISQKIDVTDIDAVIALSKELKLDNNFDLENENIGNIASQIAVISEIRNNLNKYLINLVKTTPRMIMEGRDIGTVVAPDADLKIFITANPQIRAERRYKQLQAKGKTCILAEILQQIILRDKRDKERKAAPLLPASDALIIDTSKLSAMEVVEEVTNYIKNKIT</sequence>
<organism>
    <name type="scientific">Rickettsia rickettsii (strain Sheila Smith)</name>
    <dbReference type="NCBI Taxonomy" id="392021"/>
    <lineage>
        <taxon>Bacteria</taxon>
        <taxon>Pseudomonadati</taxon>
        <taxon>Pseudomonadota</taxon>
        <taxon>Alphaproteobacteria</taxon>
        <taxon>Rickettsiales</taxon>
        <taxon>Rickettsiaceae</taxon>
        <taxon>Rickettsieae</taxon>
        <taxon>Rickettsia</taxon>
        <taxon>spotted fever group</taxon>
    </lineage>
</organism>
<evidence type="ECO:0000255" key="1">
    <source>
        <dbReference type="HAMAP-Rule" id="MF_00238"/>
    </source>
</evidence>
<protein>
    <recommendedName>
        <fullName evidence="1">Cytidylate kinase</fullName>
        <shortName evidence="1">CK</shortName>
        <ecNumber evidence="1">2.7.4.25</ecNumber>
    </recommendedName>
    <alternativeName>
        <fullName evidence="1">Cytidine monophosphate kinase</fullName>
        <shortName evidence="1">CMP kinase</shortName>
    </alternativeName>
</protein>
<comment type="catalytic activity">
    <reaction evidence="1">
        <text>CMP + ATP = CDP + ADP</text>
        <dbReference type="Rhea" id="RHEA:11600"/>
        <dbReference type="ChEBI" id="CHEBI:30616"/>
        <dbReference type="ChEBI" id="CHEBI:58069"/>
        <dbReference type="ChEBI" id="CHEBI:60377"/>
        <dbReference type="ChEBI" id="CHEBI:456216"/>
        <dbReference type="EC" id="2.7.4.25"/>
    </reaction>
</comment>
<comment type="catalytic activity">
    <reaction evidence="1">
        <text>dCMP + ATP = dCDP + ADP</text>
        <dbReference type="Rhea" id="RHEA:25094"/>
        <dbReference type="ChEBI" id="CHEBI:30616"/>
        <dbReference type="ChEBI" id="CHEBI:57566"/>
        <dbReference type="ChEBI" id="CHEBI:58593"/>
        <dbReference type="ChEBI" id="CHEBI:456216"/>
        <dbReference type="EC" id="2.7.4.25"/>
    </reaction>
</comment>
<comment type="subcellular location">
    <subcellularLocation>
        <location evidence="1">Cytoplasm</location>
    </subcellularLocation>
</comment>
<comment type="similarity">
    <text evidence="1">Belongs to the cytidylate kinase family. Type 1 subfamily.</text>
</comment>
<proteinExistence type="inferred from homology"/>
<feature type="chain" id="PRO_1000048267" description="Cytidylate kinase">
    <location>
        <begin position="1"/>
        <end position="219"/>
    </location>
</feature>
<feature type="binding site" evidence="1">
    <location>
        <begin position="21"/>
        <end position="29"/>
    </location>
    <ligand>
        <name>ATP</name>
        <dbReference type="ChEBI" id="CHEBI:30616"/>
    </ligand>
</feature>
<gene>
    <name evidence="1" type="primary">cmk</name>
    <name type="ordered locus">A1G_04215</name>
</gene>
<name>KCY_RICRS</name>
<accession>A8GSH6</accession>